<name>MYMK_DANRE</name>
<comment type="function">
    <text evidence="2 4 5 6 8">Myoblast-specific protein that mediates myoblast fusion, an essential step for the formation of multi-nucleated muscle fibers (PubMed:25078621, PubMed:28161523, PubMed:28681861, PubMed:30016436). Actively participates in the membrane fusion reaction by mediating the mixing of cell membrane lipids (hemifusion) upstream of mymx (By similarity).</text>
</comment>
<comment type="subcellular location">
    <subcellularLocation>
        <location evidence="2">Cell membrane</location>
        <topology evidence="3">Multi-pass membrane protein</topology>
    </subcellularLocation>
    <text evidence="2">Localizes on the cell surface of myoblasts.</text>
</comment>
<comment type="developmental stage">
    <text evidence="4 7">Specifically expressed in the developing somites, concomitant with muscle differentiation.</text>
</comment>
<comment type="disruption phenotype">
    <text evidence="4 5 6 8">Homozygous knockout animals are viable (PubMed:28681861). While, larval and early juvenile fish show no overt phenotype, adult animals are small and develop craniofacial deformities (PubMed:28681861, PubMed:30016436). Mutant embryos lack fast-twitch myoblast fusion at 24 hours post-fertilization (hpf) (PubMed:25078621, PubMed:28161523, PubMed:28681861, PubMed:30016436). No alteration in the organization of slow-twitch myofibers, that do not fuse (PubMed:28681861, PubMed:30016436). In adults, fast-twitch musculature shows variably-sized hypotrophic fibers with variable degrees of fatty infiltration compared to wild-type siblings (PubMed:28681861, PubMed:30016436).</text>
</comment>
<comment type="similarity">
    <text evidence="10">Belongs to the TMEM8 family.</text>
</comment>
<comment type="caution">
    <text evidence="4 5 6 8">According to a report, morpholino knockdown in embryos is lethal (PubMed:25078621). Other publications report that morpholino knockdown animals are viable (PubMed:28161523, PubMed:28681861, PubMed:30016436).</text>
</comment>
<proteinExistence type="evidence at transcript level"/>
<organism>
    <name type="scientific">Danio rerio</name>
    <name type="common">Zebrafish</name>
    <name type="synonym">Brachydanio rerio</name>
    <dbReference type="NCBI Taxonomy" id="7955"/>
    <lineage>
        <taxon>Eukaryota</taxon>
        <taxon>Metazoa</taxon>
        <taxon>Chordata</taxon>
        <taxon>Craniata</taxon>
        <taxon>Vertebrata</taxon>
        <taxon>Euteleostomi</taxon>
        <taxon>Actinopterygii</taxon>
        <taxon>Neopterygii</taxon>
        <taxon>Teleostei</taxon>
        <taxon>Ostariophysi</taxon>
        <taxon>Cypriniformes</taxon>
        <taxon>Danionidae</taxon>
        <taxon>Danioninae</taxon>
        <taxon>Danio</taxon>
    </lineage>
</organism>
<protein>
    <recommendedName>
        <fullName evidence="2">Protein myomaker</fullName>
    </recommendedName>
    <alternativeName>
        <fullName evidence="2">Myoblast fusion maker</fullName>
    </alternativeName>
    <alternativeName>
        <fullName>Transmembrane protein 8C</fullName>
    </alternativeName>
</protein>
<accession>Q6IQ69</accession>
<keyword id="KW-1003">Cell membrane</keyword>
<keyword id="KW-0472">Membrane</keyword>
<keyword id="KW-0517">Myogenesis</keyword>
<keyword id="KW-1185">Reference proteome</keyword>
<keyword id="KW-0812">Transmembrane</keyword>
<keyword id="KW-1133">Transmembrane helix</keyword>
<feature type="chain" id="PRO_0000319064" description="Protein myomaker">
    <location>
        <begin position="1"/>
        <end position="220"/>
    </location>
</feature>
<feature type="topological domain" description="Extracellular" evidence="10">
    <location>
        <position position="1"/>
    </location>
</feature>
<feature type="transmembrane region" description="Helical" evidence="3">
    <location>
        <begin position="2"/>
        <end position="22"/>
    </location>
</feature>
<feature type="topological domain" description="Cytoplasmic" evidence="10">
    <location>
        <begin position="23"/>
        <end position="37"/>
    </location>
</feature>
<feature type="transmembrane region" description="Helical" evidence="3">
    <location>
        <begin position="38"/>
        <end position="58"/>
    </location>
</feature>
<feature type="topological domain" description="Extracellular" evidence="10">
    <location>
        <begin position="59"/>
        <end position="64"/>
    </location>
</feature>
<feature type="transmembrane region" description="Helical" evidence="3">
    <location>
        <begin position="65"/>
        <end position="85"/>
    </location>
</feature>
<feature type="topological domain" description="Cytoplasmic" evidence="10">
    <location>
        <begin position="86"/>
        <end position="93"/>
    </location>
</feature>
<feature type="transmembrane region" description="Helical" evidence="3">
    <location>
        <begin position="94"/>
        <end position="110"/>
    </location>
</feature>
<feature type="topological domain" description="Extracellular" evidence="2">
    <location>
        <begin position="111"/>
        <end position="112"/>
    </location>
</feature>
<feature type="transmembrane region" description="Helical" evidence="3">
    <location>
        <begin position="113"/>
        <end position="133"/>
    </location>
</feature>
<feature type="topological domain" description="Cytoplasmic" evidence="2">
    <location>
        <begin position="134"/>
        <end position="153"/>
    </location>
</feature>
<feature type="transmembrane region" description="Helical" evidence="3">
    <location>
        <begin position="154"/>
        <end position="174"/>
    </location>
</feature>
<feature type="topological domain" description="Extracellular" evidence="10">
    <location>
        <position position="175"/>
    </location>
</feature>
<feature type="transmembrane region" description="Helical" evidence="3">
    <location>
        <begin position="176"/>
        <end position="196"/>
    </location>
</feature>
<feature type="topological domain" description="Cytoplasmic" evidence="10">
    <location>
        <begin position="197"/>
        <end position="220"/>
    </location>
</feature>
<gene>
    <name evidence="2" type="primary">mymk</name>
    <name evidence="1" type="synonym">tmem8c</name>
    <name evidence="9" type="ORF">zgc:86927</name>
</gene>
<evidence type="ECO:0000250" key="1">
    <source>
        <dbReference type="UniProtKB" id="A6NI61"/>
    </source>
</evidence>
<evidence type="ECO:0000250" key="2">
    <source>
        <dbReference type="UniProtKB" id="Q9D1N4"/>
    </source>
</evidence>
<evidence type="ECO:0000255" key="3"/>
<evidence type="ECO:0000269" key="4">
    <source>
    </source>
</evidence>
<evidence type="ECO:0000269" key="5">
    <source>
    </source>
</evidence>
<evidence type="ECO:0000269" key="6">
    <source>
    </source>
</evidence>
<evidence type="ECO:0000269" key="7">
    <source>
    </source>
</evidence>
<evidence type="ECO:0000269" key="8">
    <source>
    </source>
</evidence>
<evidence type="ECO:0000303" key="9">
    <source ref="1"/>
</evidence>
<evidence type="ECO:0000305" key="10"/>
<sequence>MGAFIAKMLLPTISSLVFVPAASVAAKRGFHMEAMVYFFTMFFTAIYHACDGPGLSILCFMKYDILEYFSVYGTAISMWVTLLALGDFDEPKRSSLTMFGVLTAAVRIYQDRLGYGIYSGPIGTAVFMITVKWLQKMKEKKGLYPDKSVYTQQVGPGCCFGALALMLRFYFEEWDYAYVHSFYHVSLAMSFILLLPKKNRYAGTGRNAAKLNCYTLCCCV</sequence>
<dbReference type="EMBL" id="BC071541">
    <property type="protein sequence ID" value="AAH71541.1"/>
    <property type="molecule type" value="mRNA"/>
</dbReference>
<dbReference type="RefSeq" id="NP_001002088.1">
    <property type="nucleotide sequence ID" value="NM_001002088.1"/>
</dbReference>
<dbReference type="RefSeq" id="XP_017211543.1">
    <property type="nucleotide sequence ID" value="XM_017356054.1"/>
</dbReference>
<dbReference type="SMR" id="Q6IQ69"/>
<dbReference type="FunCoup" id="Q6IQ69">
    <property type="interactions" value="1118"/>
</dbReference>
<dbReference type="STRING" id="7955.ENSDARP00000132422"/>
<dbReference type="TCDB" id="1.N.2.1.4">
    <property type="family name" value="the myoblast fusion complex (mfc) family"/>
</dbReference>
<dbReference type="PaxDb" id="7955-ENSDARP00000039105"/>
<dbReference type="Ensembl" id="ENSDART00000161578">
    <property type="protein sequence ID" value="ENSDARP00000132422"/>
    <property type="gene ID" value="ENSDARG00000103988"/>
</dbReference>
<dbReference type="Ensembl" id="ENSDART00000190969">
    <property type="protein sequence ID" value="ENSDARP00000149896"/>
    <property type="gene ID" value="ENSDARG00000103988"/>
</dbReference>
<dbReference type="GeneID" id="415178"/>
<dbReference type="KEGG" id="dre:415178"/>
<dbReference type="AGR" id="ZFIN:ZDB-GENE-040625-66"/>
<dbReference type="CTD" id="389827"/>
<dbReference type="ZFIN" id="ZDB-GENE-040625-66">
    <property type="gene designation" value="mymk"/>
</dbReference>
<dbReference type="eggNOG" id="ENOG502REE6">
    <property type="taxonomic scope" value="Eukaryota"/>
</dbReference>
<dbReference type="HOGENOM" id="CLU_084233_0_0_1"/>
<dbReference type="InParanoid" id="Q6IQ69"/>
<dbReference type="OMA" id="HHACSGP"/>
<dbReference type="OrthoDB" id="8770806at2759"/>
<dbReference type="PhylomeDB" id="Q6IQ69"/>
<dbReference type="PRO" id="PR:Q6IQ69"/>
<dbReference type="Proteomes" id="UP000000437">
    <property type="component" value="Chromosome 5"/>
</dbReference>
<dbReference type="Bgee" id="ENSDARG00000103988">
    <property type="expression patterns" value="Expressed in post-anal tail and 6 other cell types or tissues"/>
</dbReference>
<dbReference type="GO" id="GO:0000139">
    <property type="term" value="C:Golgi membrane"/>
    <property type="evidence" value="ECO:0000250"/>
    <property type="project" value="UniProtKB"/>
</dbReference>
<dbReference type="GO" id="GO:0016020">
    <property type="term" value="C:membrane"/>
    <property type="evidence" value="ECO:0000314"/>
    <property type="project" value="ZFIN"/>
</dbReference>
<dbReference type="GO" id="GO:0005886">
    <property type="term" value="C:plasma membrane"/>
    <property type="evidence" value="ECO:0000250"/>
    <property type="project" value="UniProtKB"/>
</dbReference>
<dbReference type="GO" id="GO:0007517">
    <property type="term" value="P:muscle organ development"/>
    <property type="evidence" value="ECO:0007669"/>
    <property type="project" value="UniProtKB-KW"/>
</dbReference>
<dbReference type="GO" id="GO:0007520">
    <property type="term" value="P:myoblast fusion"/>
    <property type="evidence" value="ECO:0000315"/>
    <property type="project" value="UniProtKB"/>
</dbReference>
<dbReference type="GO" id="GO:0045026">
    <property type="term" value="P:plasma membrane fusion"/>
    <property type="evidence" value="ECO:0000250"/>
    <property type="project" value="UniProtKB"/>
</dbReference>
<dbReference type="GO" id="GO:1904206">
    <property type="term" value="P:positive regulation of skeletal muscle hypertrophy"/>
    <property type="evidence" value="ECO:0000250"/>
    <property type="project" value="UniProtKB"/>
</dbReference>
<dbReference type="GO" id="GO:0048742">
    <property type="term" value="P:regulation of skeletal muscle fiber development"/>
    <property type="evidence" value="ECO:0000315"/>
    <property type="project" value="ZFIN"/>
</dbReference>
<dbReference type="InterPro" id="IPR021910">
    <property type="entry name" value="NGX6/PGAP6/MYMK"/>
</dbReference>
<dbReference type="PANTHER" id="PTHR14319">
    <property type="entry name" value="FIVE-SPAN TRANSMEMBRANE PROTEIN M83"/>
    <property type="match status" value="1"/>
</dbReference>
<dbReference type="PANTHER" id="PTHR14319:SF7">
    <property type="entry name" value="POST-GPI ATTACHMENT TO PROTEINS FACTOR 6"/>
    <property type="match status" value="1"/>
</dbReference>
<dbReference type="Pfam" id="PF12036">
    <property type="entry name" value="DUF3522"/>
    <property type="match status" value="1"/>
</dbReference>
<reference key="1">
    <citation type="submission" date="2004-06" db="EMBL/GenBank/DDBJ databases">
        <authorList>
            <consortium name="NIH - Zebrafish Gene Collection (ZGC) project"/>
        </authorList>
    </citation>
    <scope>NUCLEOTIDE SEQUENCE [LARGE SCALE MRNA]</scope>
    <source>
        <tissue>Embryo</tissue>
    </source>
</reference>
<reference key="2">
    <citation type="journal article" date="2014" name="Biochem. Biophys. Res. Commun.">
        <title>Myomaker mediates fusion of fast myocytes in zebrafish embryos.</title>
        <authorList>
            <person name="Landemaine A."/>
            <person name="Rescan P.Y."/>
            <person name="Gabillard J.C."/>
        </authorList>
    </citation>
    <scope>FUNCTION</scope>
    <scope>DEVELOPMENTAL STAGE</scope>
    <scope>DISRUPTION PHENOTYPE</scope>
</reference>
<reference key="3">
    <citation type="journal article" date="2017" name="Nat. Commun.">
        <title>A defect in myoblast fusion underlies Carey-Fineman-Ziter syndrome.</title>
        <authorList>
            <consortium name="Moebius Syndrome Research Consortium"/>
            <person name="Di Gioia S.A."/>
            <person name="Connors S."/>
            <person name="Matsunami N."/>
            <person name="Cannavino J."/>
            <person name="Rose M.F."/>
            <person name="Gilette N.M."/>
            <person name="Artoni P."/>
            <person name="de Macena Sobreira N.L."/>
            <person name="Chan W.M."/>
            <person name="Webb B.D."/>
            <person name="Robson C.D."/>
            <person name="Cheng L."/>
            <person name="Van Ryzin C."/>
            <person name="Ramirez-Martinez A."/>
            <person name="Mohassel P."/>
            <person name="Leppert M."/>
            <person name="Scholand M.B."/>
            <person name="Grunseich C."/>
            <person name="Ferreira C.R."/>
            <person name="Hartman T."/>
            <person name="Hayes I.M."/>
            <person name="Morgan T."/>
            <person name="Markie D.M."/>
            <person name="Fagiolini M."/>
            <person name="Swift A."/>
            <person name="Chines P.S."/>
            <person name="Speck-Martins C.E."/>
            <person name="Collins F.S."/>
            <person name="Jabs E.W."/>
            <person name="Boennemann C.G."/>
            <person name="Olson E.N."/>
            <person name="Carey J.C."/>
            <person name="Robertson S.P."/>
            <person name="Manoli I."/>
            <person name="Engle E.C."/>
        </authorList>
    </citation>
    <scope>FUNCTION</scope>
    <scope>DISRUPTION PHENOTYPE</scope>
</reference>
<reference key="4">
    <citation type="journal article" date="2017" name="Dev. Biol.">
        <title>Myomaker is required for the fusion of fast-twitch myocytes in the zebrafish embryo.</title>
        <authorList>
            <person name="Zhang W."/>
            <person name="Roy S."/>
        </authorList>
    </citation>
    <scope>FUNCTION</scope>
    <scope>DISRUPTION PHENOTYPE</scope>
</reference>
<reference key="5">
    <citation type="journal article" date="2017" name="Proc. Natl. Acad. Sci. U.S.A.">
        <title>Requirement of the fusogenic micropeptide myomixer for muscle formation in zebrafish.</title>
        <authorList>
            <person name="Shi J."/>
            <person name="Bi P."/>
            <person name="Pei J."/>
            <person name="Li H."/>
            <person name="Grishin N.V."/>
            <person name="Bassel-Duby R."/>
            <person name="Chen E.H."/>
            <person name="Olson E.N."/>
        </authorList>
    </citation>
    <scope>DEVELOPMENTAL STAGE</scope>
</reference>
<reference key="6">
    <citation type="journal article" date="2018" name="Hum. Mol. Genet.">
        <title>Knockout of myomaker results in defective myoblast fusion, reduced muscle growth and increased adipocyte infiltration in zebrafish skeletal muscle.</title>
        <authorList>
            <person name="Shi J."/>
            <person name="Cai M."/>
            <person name="Si Y."/>
            <person name="Zhang J."/>
            <person name="Du S."/>
        </authorList>
    </citation>
    <scope>FUNCTION</scope>
    <scope>DISRUPTION PHENOTYPE</scope>
</reference>